<sequence>MLKIFEKLFGSKHEKDVKKIQPTIQRINELQRALASLSDEQLRQKGRELKQKVRGVLEPMELEQQKLFHQLDSPNISLDEAESVNNKLDDLAVAYETATASVLEEILPDTFALVKETCARLKGHTYNVMGRQFVWNMVPYDVQLIGGIVLHSGKIAEMQTGEGKTLVSTLPTFLNALTGRGVHVVTVNDYLAQRDKEWMEPLFAFHNLSVGVILTSMHPALRRAQYLCDITYGTNNELGFDYLRDNMANTPEEMVQRKFYYAIVDEVDSVLIDEARTPLIISGPVPNADNSKFQEIKPWIEQLVRAQQQQIAAWLGDAETRMKTNATDPEAGLALLRVKRGQPKNSRFIKMLSQQGVAKLVQITENEYLKDNSSRMHEVDDALFYAVDEKANTIDLTDKGRDFLSKLSHQDSDIFLLPDVGTEIATIESNAALSTNDKIQHKDALYRLFSDRSERLHNISQLLKAYSLFERDDEYVVQNGQVMIVDEFTGRILPGRRYSDGLHQAIEAKENVKIEGETQTMATITIQNFFRLYKKLAGMTGTAETEASEFYEIYKLDVVVIPTNASVVRKDMDDLVYKTRREKYNAIAQKVEELQKRGQPVLVGTTSVEVSETLSRMLRTRRIAHNVLNAKQNDREAEIVAEAGQKGTVTIATNMAGRGTDIKLGDGVRELGGLYILGSERHESRRIDRQLRGRAGRQGDPGESVFYVSLEDELMRLFGSDRVIAVMDRLGHEEGDVIEHSMITKSIERAQKKVEEQNFAIRKRLLEYDDVLNQQREVIYSRRKNGLLKERLTSDILDLLKDYSDTIVKKYHKDFDTAGLEEQLMRDLSIEFQLDRATFEREGIDAVVDKVYETALTFYRRKEESLPADIMCQIEKYAVLTVIDQRWREHLREIDSLREGINLRAYGQKDPLIEYKQEAFRLFITLLKEIEAETLSLAFKLFPIDPEEQQQIEERQRQSAIRQEKLVAQHDVAESFVGLNDDDEPLPAQPITTEQKPGRNDLCPCGSGKKYKACCGQ</sequence>
<gene>
    <name evidence="1" type="primary">secA1</name>
    <name type="ordered locus">Cag_1018</name>
</gene>
<protein>
    <recommendedName>
        <fullName evidence="1">Protein translocase subunit SecA 1</fullName>
        <ecNumber evidence="1">7.4.2.8</ecNumber>
    </recommendedName>
</protein>
<evidence type="ECO:0000255" key="1">
    <source>
        <dbReference type="HAMAP-Rule" id="MF_01382"/>
    </source>
</evidence>
<evidence type="ECO:0000256" key="2">
    <source>
        <dbReference type="SAM" id="MobiDB-lite"/>
    </source>
</evidence>
<keyword id="KW-0067">ATP-binding</keyword>
<keyword id="KW-0997">Cell inner membrane</keyword>
<keyword id="KW-1003">Cell membrane</keyword>
<keyword id="KW-0963">Cytoplasm</keyword>
<keyword id="KW-0472">Membrane</keyword>
<keyword id="KW-0479">Metal-binding</keyword>
<keyword id="KW-0547">Nucleotide-binding</keyword>
<keyword id="KW-0653">Protein transport</keyword>
<keyword id="KW-1278">Translocase</keyword>
<keyword id="KW-0811">Translocation</keyword>
<keyword id="KW-0813">Transport</keyword>
<keyword id="KW-0862">Zinc</keyword>
<dbReference type="EC" id="7.4.2.8" evidence="1"/>
<dbReference type="EMBL" id="CP000108">
    <property type="protein sequence ID" value="ABB28280.1"/>
    <property type="molecule type" value="Genomic_DNA"/>
</dbReference>
<dbReference type="SMR" id="Q3ARU5"/>
<dbReference type="STRING" id="340177.Cag_1018"/>
<dbReference type="KEGG" id="cch:Cag_1018"/>
<dbReference type="eggNOG" id="COG0653">
    <property type="taxonomic scope" value="Bacteria"/>
</dbReference>
<dbReference type="HOGENOM" id="CLU_005314_0_0_10"/>
<dbReference type="OrthoDB" id="9805579at2"/>
<dbReference type="GO" id="GO:0031522">
    <property type="term" value="C:cell envelope Sec protein transport complex"/>
    <property type="evidence" value="ECO:0007669"/>
    <property type="project" value="TreeGrafter"/>
</dbReference>
<dbReference type="GO" id="GO:0005829">
    <property type="term" value="C:cytosol"/>
    <property type="evidence" value="ECO:0007669"/>
    <property type="project" value="TreeGrafter"/>
</dbReference>
<dbReference type="GO" id="GO:0005886">
    <property type="term" value="C:plasma membrane"/>
    <property type="evidence" value="ECO:0007669"/>
    <property type="project" value="UniProtKB-SubCell"/>
</dbReference>
<dbReference type="GO" id="GO:0005524">
    <property type="term" value="F:ATP binding"/>
    <property type="evidence" value="ECO:0007669"/>
    <property type="project" value="UniProtKB-UniRule"/>
</dbReference>
<dbReference type="GO" id="GO:0046872">
    <property type="term" value="F:metal ion binding"/>
    <property type="evidence" value="ECO:0007669"/>
    <property type="project" value="UniProtKB-KW"/>
</dbReference>
<dbReference type="GO" id="GO:0008564">
    <property type="term" value="F:protein-exporting ATPase activity"/>
    <property type="evidence" value="ECO:0007669"/>
    <property type="project" value="UniProtKB-EC"/>
</dbReference>
<dbReference type="GO" id="GO:0065002">
    <property type="term" value="P:intracellular protein transmembrane transport"/>
    <property type="evidence" value="ECO:0007669"/>
    <property type="project" value="UniProtKB-UniRule"/>
</dbReference>
<dbReference type="GO" id="GO:0017038">
    <property type="term" value="P:protein import"/>
    <property type="evidence" value="ECO:0007669"/>
    <property type="project" value="InterPro"/>
</dbReference>
<dbReference type="GO" id="GO:0006605">
    <property type="term" value="P:protein targeting"/>
    <property type="evidence" value="ECO:0007669"/>
    <property type="project" value="UniProtKB-UniRule"/>
</dbReference>
<dbReference type="GO" id="GO:0043952">
    <property type="term" value="P:protein transport by the Sec complex"/>
    <property type="evidence" value="ECO:0007669"/>
    <property type="project" value="TreeGrafter"/>
</dbReference>
<dbReference type="CDD" id="cd17928">
    <property type="entry name" value="DEXDc_SecA"/>
    <property type="match status" value="1"/>
</dbReference>
<dbReference type="CDD" id="cd18803">
    <property type="entry name" value="SF2_C_secA"/>
    <property type="match status" value="1"/>
</dbReference>
<dbReference type="FunFam" id="3.40.50.300:FF:000246">
    <property type="entry name" value="Preprotein translocase subunit SecA"/>
    <property type="match status" value="1"/>
</dbReference>
<dbReference type="FunFam" id="3.40.50.300:FF:000694">
    <property type="entry name" value="Preprotein translocase subunit SecA"/>
    <property type="match status" value="1"/>
</dbReference>
<dbReference type="Gene3D" id="1.10.3060.10">
    <property type="entry name" value="Helical scaffold and wing domains of SecA"/>
    <property type="match status" value="1"/>
</dbReference>
<dbReference type="Gene3D" id="3.40.50.300">
    <property type="entry name" value="P-loop containing nucleotide triphosphate hydrolases"/>
    <property type="match status" value="3"/>
</dbReference>
<dbReference type="Gene3D" id="3.90.1440.10">
    <property type="entry name" value="SecA, preprotein cross-linking domain"/>
    <property type="match status" value="1"/>
</dbReference>
<dbReference type="HAMAP" id="MF_01382">
    <property type="entry name" value="SecA"/>
    <property type="match status" value="1"/>
</dbReference>
<dbReference type="InterPro" id="IPR014001">
    <property type="entry name" value="Helicase_ATP-bd"/>
</dbReference>
<dbReference type="InterPro" id="IPR001650">
    <property type="entry name" value="Helicase_C-like"/>
</dbReference>
<dbReference type="InterPro" id="IPR027417">
    <property type="entry name" value="P-loop_NTPase"/>
</dbReference>
<dbReference type="InterPro" id="IPR004027">
    <property type="entry name" value="SEC_C_motif"/>
</dbReference>
<dbReference type="InterPro" id="IPR000185">
    <property type="entry name" value="SecA"/>
</dbReference>
<dbReference type="InterPro" id="IPR020937">
    <property type="entry name" value="SecA_CS"/>
</dbReference>
<dbReference type="InterPro" id="IPR011115">
    <property type="entry name" value="SecA_DEAD"/>
</dbReference>
<dbReference type="InterPro" id="IPR014018">
    <property type="entry name" value="SecA_motor_DEAD"/>
</dbReference>
<dbReference type="InterPro" id="IPR011130">
    <property type="entry name" value="SecA_preprotein_X-link_dom"/>
</dbReference>
<dbReference type="InterPro" id="IPR044722">
    <property type="entry name" value="SecA_SF2_C"/>
</dbReference>
<dbReference type="InterPro" id="IPR011116">
    <property type="entry name" value="SecA_Wing/Scaffold"/>
</dbReference>
<dbReference type="InterPro" id="IPR036266">
    <property type="entry name" value="SecA_Wing/Scaffold_sf"/>
</dbReference>
<dbReference type="InterPro" id="IPR036670">
    <property type="entry name" value="SecA_X-link_sf"/>
</dbReference>
<dbReference type="NCBIfam" id="TIGR00963">
    <property type="entry name" value="secA"/>
    <property type="match status" value="1"/>
</dbReference>
<dbReference type="PANTHER" id="PTHR30612:SF0">
    <property type="entry name" value="CHLOROPLAST PROTEIN-TRANSPORTING ATPASE"/>
    <property type="match status" value="1"/>
</dbReference>
<dbReference type="PANTHER" id="PTHR30612">
    <property type="entry name" value="SECA INNER MEMBRANE COMPONENT OF SEC PROTEIN SECRETION SYSTEM"/>
    <property type="match status" value="1"/>
</dbReference>
<dbReference type="Pfam" id="PF21090">
    <property type="entry name" value="P-loop_SecA"/>
    <property type="match status" value="2"/>
</dbReference>
<dbReference type="Pfam" id="PF02810">
    <property type="entry name" value="SEC-C"/>
    <property type="match status" value="1"/>
</dbReference>
<dbReference type="Pfam" id="PF07517">
    <property type="entry name" value="SecA_DEAD"/>
    <property type="match status" value="1"/>
</dbReference>
<dbReference type="Pfam" id="PF01043">
    <property type="entry name" value="SecA_PP_bind"/>
    <property type="match status" value="1"/>
</dbReference>
<dbReference type="Pfam" id="PF07516">
    <property type="entry name" value="SecA_SW"/>
    <property type="match status" value="1"/>
</dbReference>
<dbReference type="PRINTS" id="PR00906">
    <property type="entry name" value="SECA"/>
</dbReference>
<dbReference type="SMART" id="SM00957">
    <property type="entry name" value="SecA_DEAD"/>
    <property type="match status" value="1"/>
</dbReference>
<dbReference type="SMART" id="SM00958">
    <property type="entry name" value="SecA_PP_bind"/>
    <property type="match status" value="1"/>
</dbReference>
<dbReference type="SUPFAM" id="SSF81886">
    <property type="entry name" value="Helical scaffold and wing domains of SecA"/>
    <property type="match status" value="1"/>
</dbReference>
<dbReference type="SUPFAM" id="SSF52540">
    <property type="entry name" value="P-loop containing nucleoside triphosphate hydrolases"/>
    <property type="match status" value="2"/>
</dbReference>
<dbReference type="SUPFAM" id="SSF81767">
    <property type="entry name" value="Pre-protein crosslinking domain of SecA"/>
    <property type="match status" value="1"/>
</dbReference>
<dbReference type="PROSITE" id="PS01312">
    <property type="entry name" value="SECA"/>
    <property type="match status" value="1"/>
</dbReference>
<dbReference type="PROSITE" id="PS51196">
    <property type="entry name" value="SECA_MOTOR_DEAD"/>
    <property type="match status" value="1"/>
</dbReference>
<comment type="function">
    <text evidence="1">Part of the Sec protein translocase complex. Interacts with the SecYEG preprotein conducting channel. Has a central role in coupling the hydrolysis of ATP to the transfer of proteins into and across the cell membrane, serving as an ATP-driven molecular motor driving the stepwise translocation of polypeptide chains across the membrane.</text>
</comment>
<comment type="catalytic activity">
    <reaction evidence="1">
        <text>ATP + H2O + cellular proteinSide 1 = ADP + phosphate + cellular proteinSide 2.</text>
        <dbReference type="EC" id="7.4.2.8"/>
    </reaction>
</comment>
<comment type="cofactor">
    <cofactor evidence="1">
        <name>Zn(2+)</name>
        <dbReference type="ChEBI" id="CHEBI:29105"/>
    </cofactor>
    <text evidence="1">May bind 1 zinc ion per subunit.</text>
</comment>
<comment type="subunit">
    <text evidence="1">Monomer and homodimer. Part of the essential Sec protein translocation apparatus which comprises SecA, SecYEG and auxiliary proteins SecDF. Other proteins may also be involved.</text>
</comment>
<comment type="subcellular location">
    <subcellularLocation>
        <location evidence="1">Cell inner membrane</location>
        <topology evidence="1">Peripheral membrane protein</topology>
        <orientation evidence="1">Cytoplasmic side</orientation>
    </subcellularLocation>
    <subcellularLocation>
        <location evidence="1">Cytoplasm</location>
    </subcellularLocation>
    <text evidence="1">Distribution is 50-50.</text>
</comment>
<comment type="similarity">
    <text evidence="1">Belongs to the SecA family.</text>
</comment>
<proteinExistence type="inferred from homology"/>
<feature type="chain" id="PRO_0000320770" description="Protein translocase subunit SecA 1">
    <location>
        <begin position="1"/>
        <end position="1017"/>
    </location>
</feature>
<feature type="region of interest" description="Disordered" evidence="2">
    <location>
        <begin position="978"/>
        <end position="999"/>
    </location>
</feature>
<feature type="binding site" evidence="1">
    <location>
        <position position="143"/>
    </location>
    <ligand>
        <name>ATP</name>
        <dbReference type="ChEBI" id="CHEBI:30616"/>
    </ligand>
</feature>
<feature type="binding site" evidence="1">
    <location>
        <begin position="161"/>
        <end position="165"/>
    </location>
    <ligand>
        <name>ATP</name>
        <dbReference type="ChEBI" id="CHEBI:30616"/>
    </ligand>
</feature>
<feature type="binding site" evidence="1">
    <location>
        <position position="661"/>
    </location>
    <ligand>
        <name>ATP</name>
        <dbReference type="ChEBI" id="CHEBI:30616"/>
    </ligand>
</feature>
<feature type="binding site" evidence="1">
    <location>
        <position position="1003"/>
    </location>
    <ligand>
        <name>Zn(2+)</name>
        <dbReference type="ChEBI" id="CHEBI:29105"/>
    </ligand>
</feature>
<feature type="binding site" evidence="1">
    <location>
        <position position="1005"/>
    </location>
    <ligand>
        <name>Zn(2+)</name>
        <dbReference type="ChEBI" id="CHEBI:29105"/>
    </ligand>
</feature>
<feature type="binding site" evidence="1">
    <location>
        <position position="1014"/>
    </location>
    <ligand>
        <name>Zn(2+)</name>
        <dbReference type="ChEBI" id="CHEBI:29105"/>
    </ligand>
</feature>
<feature type="binding site" evidence="1">
    <location>
        <position position="1015"/>
    </location>
    <ligand>
        <name>Zn(2+)</name>
        <dbReference type="ChEBI" id="CHEBI:29105"/>
    </ligand>
</feature>
<accession>Q3ARU5</accession>
<name>SECA1_CHLCH</name>
<organism>
    <name type="scientific">Chlorobium chlorochromatii (strain CaD3)</name>
    <dbReference type="NCBI Taxonomy" id="340177"/>
    <lineage>
        <taxon>Bacteria</taxon>
        <taxon>Pseudomonadati</taxon>
        <taxon>Chlorobiota</taxon>
        <taxon>Chlorobiia</taxon>
        <taxon>Chlorobiales</taxon>
        <taxon>Chlorobiaceae</taxon>
        <taxon>Chlorobium/Pelodictyon group</taxon>
        <taxon>Chlorobium</taxon>
    </lineage>
</organism>
<reference key="1">
    <citation type="submission" date="2005-08" db="EMBL/GenBank/DDBJ databases">
        <title>Complete sequence of Chlorobium chlorochromatii CaD3.</title>
        <authorList>
            <consortium name="US DOE Joint Genome Institute"/>
            <person name="Copeland A."/>
            <person name="Lucas S."/>
            <person name="Lapidus A."/>
            <person name="Barry K."/>
            <person name="Detter J.C."/>
            <person name="Glavina T."/>
            <person name="Hammon N."/>
            <person name="Israni S."/>
            <person name="Pitluck S."/>
            <person name="Bryant D."/>
            <person name="Schmutz J."/>
            <person name="Larimer F."/>
            <person name="Land M."/>
            <person name="Kyrpides N."/>
            <person name="Ivanova N."/>
            <person name="Richardson P."/>
        </authorList>
    </citation>
    <scope>NUCLEOTIDE SEQUENCE [LARGE SCALE GENOMIC DNA]</scope>
    <source>
        <strain>CaD3</strain>
    </source>
</reference>